<keyword id="KW-0067">ATP-binding</keyword>
<keyword id="KW-0414">Isoprene biosynthesis</keyword>
<keyword id="KW-0418">Kinase</keyword>
<keyword id="KW-0547">Nucleotide-binding</keyword>
<keyword id="KW-0808">Transferase</keyword>
<protein>
    <recommendedName>
        <fullName evidence="1">4-diphosphocytidyl-2-C-methyl-D-erythritol kinase</fullName>
        <shortName evidence="1">CMK</shortName>
        <ecNumber evidence="1">2.7.1.148</ecNumber>
    </recommendedName>
    <alternativeName>
        <fullName evidence="1">4-(cytidine-5'-diphospho)-2-C-methyl-D-erythritol kinase</fullName>
    </alternativeName>
</protein>
<proteinExistence type="inferred from homology"/>
<sequence>MSNEISRNWPAPAKLNLFLHINGRRADGYHELQTLFQFIDCCDLLDFRVTQTPELILHSDMSAVVADSDNLILRAAKSLQQATGYPGGAEIWLEKRLPMGGGLGGGSSDAATTLVALNQLWNTQLSNDELATIGLKLGADIPVFIRGFAAFAEGVGERLQAVTPTEFWYLVIAPDAHVSTAAVFQDPLLPRNTPKLGIDTLMSQPWANDCQDLVVSKYPQVAKALGWLLEYAPSRMTGTGACVFGEFSSQQQALAALAKLPSDMQGFVAKGMNISPLIVRLNHP</sequence>
<dbReference type="EC" id="2.7.1.148" evidence="1"/>
<dbReference type="EMBL" id="CP000444">
    <property type="protein sequence ID" value="ABI41794.1"/>
    <property type="molecule type" value="Genomic_DNA"/>
</dbReference>
<dbReference type="SMR" id="Q0HYL1"/>
<dbReference type="KEGG" id="shm:Shewmr7_0794"/>
<dbReference type="HOGENOM" id="CLU_053057_3_0_6"/>
<dbReference type="UniPathway" id="UPA00056">
    <property type="reaction ID" value="UER00094"/>
</dbReference>
<dbReference type="GO" id="GO:0050515">
    <property type="term" value="F:4-(cytidine 5'-diphospho)-2-C-methyl-D-erythritol kinase activity"/>
    <property type="evidence" value="ECO:0007669"/>
    <property type="project" value="UniProtKB-UniRule"/>
</dbReference>
<dbReference type="GO" id="GO:0005524">
    <property type="term" value="F:ATP binding"/>
    <property type="evidence" value="ECO:0007669"/>
    <property type="project" value="UniProtKB-UniRule"/>
</dbReference>
<dbReference type="GO" id="GO:0019288">
    <property type="term" value="P:isopentenyl diphosphate biosynthetic process, methylerythritol 4-phosphate pathway"/>
    <property type="evidence" value="ECO:0007669"/>
    <property type="project" value="UniProtKB-UniRule"/>
</dbReference>
<dbReference type="GO" id="GO:0016114">
    <property type="term" value="P:terpenoid biosynthetic process"/>
    <property type="evidence" value="ECO:0007669"/>
    <property type="project" value="InterPro"/>
</dbReference>
<dbReference type="FunFam" id="3.30.230.10:FF:000022">
    <property type="entry name" value="4-diphosphocytidyl-2-C-methyl-D-erythritol kinase"/>
    <property type="match status" value="1"/>
</dbReference>
<dbReference type="Gene3D" id="3.30.230.10">
    <property type="match status" value="1"/>
</dbReference>
<dbReference type="Gene3D" id="3.30.70.890">
    <property type="entry name" value="GHMP kinase, C-terminal domain"/>
    <property type="match status" value="1"/>
</dbReference>
<dbReference type="HAMAP" id="MF_00061">
    <property type="entry name" value="IspE"/>
    <property type="match status" value="1"/>
</dbReference>
<dbReference type="InterPro" id="IPR013750">
    <property type="entry name" value="GHMP_kinase_C_dom"/>
</dbReference>
<dbReference type="InterPro" id="IPR036554">
    <property type="entry name" value="GHMP_kinase_C_sf"/>
</dbReference>
<dbReference type="InterPro" id="IPR006204">
    <property type="entry name" value="GHMP_kinase_N_dom"/>
</dbReference>
<dbReference type="InterPro" id="IPR004424">
    <property type="entry name" value="IspE"/>
</dbReference>
<dbReference type="InterPro" id="IPR020568">
    <property type="entry name" value="Ribosomal_Su5_D2-typ_SF"/>
</dbReference>
<dbReference type="InterPro" id="IPR014721">
    <property type="entry name" value="Ribsml_uS5_D2-typ_fold_subgr"/>
</dbReference>
<dbReference type="NCBIfam" id="TIGR00154">
    <property type="entry name" value="ispE"/>
    <property type="match status" value="1"/>
</dbReference>
<dbReference type="PANTHER" id="PTHR43527">
    <property type="entry name" value="4-DIPHOSPHOCYTIDYL-2-C-METHYL-D-ERYTHRITOL KINASE, CHLOROPLASTIC"/>
    <property type="match status" value="1"/>
</dbReference>
<dbReference type="PANTHER" id="PTHR43527:SF2">
    <property type="entry name" value="4-DIPHOSPHOCYTIDYL-2-C-METHYL-D-ERYTHRITOL KINASE, CHLOROPLASTIC"/>
    <property type="match status" value="1"/>
</dbReference>
<dbReference type="Pfam" id="PF08544">
    <property type="entry name" value="GHMP_kinases_C"/>
    <property type="match status" value="1"/>
</dbReference>
<dbReference type="Pfam" id="PF00288">
    <property type="entry name" value="GHMP_kinases_N"/>
    <property type="match status" value="1"/>
</dbReference>
<dbReference type="PIRSF" id="PIRSF010376">
    <property type="entry name" value="IspE"/>
    <property type="match status" value="1"/>
</dbReference>
<dbReference type="SUPFAM" id="SSF55060">
    <property type="entry name" value="GHMP Kinase, C-terminal domain"/>
    <property type="match status" value="1"/>
</dbReference>
<dbReference type="SUPFAM" id="SSF54211">
    <property type="entry name" value="Ribosomal protein S5 domain 2-like"/>
    <property type="match status" value="1"/>
</dbReference>
<accession>Q0HYL1</accession>
<feature type="chain" id="PRO_1000007893" description="4-diphosphocytidyl-2-C-methyl-D-erythritol kinase">
    <location>
        <begin position="1"/>
        <end position="284"/>
    </location>
</feature>
<feature type="active site" evidence="1">
    <location>
        <position position="14"/>
    </location>
</feature>
<feature type="active site" evidence="1">
    <location>
        <position position="140"/>
    </location>
</feature>
<feature type="binding site" evidence="1">
    <location>
        <begin position="98"/>
        <end position="108"/>
    </location>
    <ligand>
        <name>ATP</name>
        <dbReference type="ChEBI" id="CHEBI:30616"/>
    </ligand>
</feature>
<comment type="function">
    <text evidence="1">Catalyzes the phosphorylation of the position 2 hydroxy group of 4-diphosphocytidyl-2C-methyl-D-erythritol.</text>
</comment>
<comment type="catalytic activity">
    <reaction evidence="1">
        <text>4-CDP-2-C-methyl-D-erythritol + ATP = 4-CDP-2-C-methyl-D-erythritol 2-phosphate + ADP + H(+)</text>
        <dbReference type="Rhea" id="RHEA:18437"/>
        <dbReference type="ChEBI" id="CHEBI:15378"/>
        <dbReference type="ChEBI" id="CHEBI:30616"/>
        <dbReference type="ChEBI" id="CHEBI:57823"/>
        <dbReference type="ChEBI" id="CHEBI:57919"/>
        <dbReference type="ChEBI" id="CHEBI:456216"/>
        <dbReference type="EC" id="2.7.1.148"/>
    </reaction>
</comment>
<comment type="pathway">
    <text evidence="1">Isoprenoid biosynthesis; isopentenyl diphosphate biosynthesis via DXP pathway; isopentenyl diphosphate from 1-deoxy-D-xylulose 5-phosphate: step 3/6.</text>
</comment>
<comment type="similarity">
    <text evidence="1">Belongs to the GHMP kinase family. IspE subfamily.</text>
</comment>
<gene>
    <name evidence="1" type="primary">ispE</name>
    <name type="ordered locus">Shewmr7_0794</name>
</gene>
<reference key="1">
    <citation type="submission" date="2006-08" db="EMBL/GenBank/DDBJ databases">
        <title>Complete sequence of chromosome 1 of Shewanella sp. MR-7.</title>
        <authorList>
            <person name="Copeland A."/>
            <person name="Lucas S."/>
            <person name="Lapidus A."/>
            <person name="Barry K."/>
            <person name="Detter J.C."/>
            <person name="Glavina del Rio T."/>
            <person name="Hammon N."/>
            <person name="Israni S."/>
            <person name="Dalin E."/>
            <person name="Tice H."/>
            <person name="Pitluck S."/>
            <person name="Kiss H."/>
            <person name="Brettin T."/>
            <person name="Bruce D."/>
            <person name="Han C."/>
            <person name="Tapia R."/>
            <person name="Gilna P."/>
            <person name="Schmutz J."/>
            <person name="Larimer F."/>
            <person name="Land M."/>
            <person name="Hauser L."/>
            <person name="Kyrpides N."/>
            <person name="Mikhailova N."/>
            <person name="Nealson K."/>
            <person name="Konstantinidis K."/>
            <person name="Klappenbach J."/>
            <person name="Tiedje J."/>
            <person name="Richardson P."/>
        </authorList>
    </citation>
    <scope>NUCLEOTIDE SEQUENCE [LARGE SCALE GENOMIC DNA]</scope>
    <source>
        <strain>MR-7</strain>
    </source>
</reference>
<name>ISPE_SHESR</name>
<evidence type="ECO:0000255" key="1">
    <source>
        <dbReference type="HAMAP-Rule" id="MF_00061"/>
    </source>
</evidence>
<organism>
    <name type="scientific">Shewanella sp. (strain MR-7)</name>
    <dbReference type="NCBI Taxonomy" id="60481"/>
    <lineage>
        <taxon>Bacteria</taxon>
        <taxon>Pseudomonadati</taxon>
        <taxon>Pseudomonadota</taxon>
        <taxon>Gammaproteobacteria</taxon>
        <taxon>Alteromonadales</taxon>
        <taxon>Shewanellaceae</taxon>
        <taxon>Shewanella</taxon>
    </lineage>
</organism>